<sequence length="125" mass="13694">MTGEPSLCIRGCGFFSTSQTKNLCSKCYNDFLKDESARYLATFNVNTKAAEEVTAQEATVLGSKGGCACKKKVGLLGFHCRCGHLFFASHRYPEEHSCPSDYKSAAIDVLAKQNPVVKGDKLFRL</sequence>
<name>SAP8_ARATH</name>
<gene>
    <name type="primary">SAP8</name>
    <name type="ordered locus">At4g14225</name>
    <name type="ORF">FCAALL.449</name>
</gene>
<comment type="function">
    <text evidence="1">May be involved in environmental stress response.</text>
</comment>
<feature type="chain" id="PRO_0000269859" description="Putative zinc finger A20 and AN1 domain-containing stress-associated protein 8">
    <location>
        <begin position="1"/>
        <end position="125"/>
    </location>
</feature>
<feature type="zinc finger region" description="A20-type" evidence="3">
    <location>
        <begin position="2"/>
        <end position="36"/>
    </location>
</feature>
<feature type="zinc finger region" description="AN1-type; degenerate" evidence="2">
    <location>
        <begin position="61"/>
        <end position="106"/>
    </location>
</feature>
<feature type="binding site" evidence="3">
    <location>
        <position position="8"/>
    </location>
    <ligand>
        <name>Zn(2+)</name>
        <dbReference type="ChEBI" id="CHEBI:29105"/>
        <label>1</label>
    </ligand>
</feature>
<feature type="binding site" evidence="3">
    <location>
        <position position="12"/>
    </location>
    <ligand>
        <name>Zn(2+)</name>
        <dbReference type="ChEBI" id="CHEBI:29105"/>
        <label>1</label>
    </ligand>
</feature>
<feature type="binding site" evidence="3">
    <location>
        <position position="24"/>
    </location>
    <ligand>
        <name>Zn(2+)</name>
        <dbReference type="ChEBI" id="CHEBI:29105"/>
        <label>1</label>
    </ligand>
</feature>
<feature type="binding site" evidence="3">
    <location>
        <position position="27"/>
    </location>
    <ligand>
        <name>Zn(2+)</name>
        <dbReference type="ChEBI" id="CHEBI:29105"/>
        <label>1</label>
    </ligand>
</feature>
<feature type="binding site" evidence="2">
    <location>
        <position position="80"/>
    </location>
    <ligand>
        <name>Zn(2+)</name>
        <dbReference type="ChEBI" id="CHEBI:29105"/>
        <label>2</label>
    </ligand>
</feature>
<feature type="binding site" evidence="2">
    <location>
        <position position="82"/>
    </location>
    <ligand>
        <name>Zn(2+)</name>
        <dbReference type="ChEBI" id="CHEBI:29105"/>
        <label>2</label>
    </ligand>
</feature>
<feature type="binding site" evidence="2">
    <location>
        <position position="96"/>
    </location>
    <ligand>
        <name>Zn(2+)</name>
        <dbReference type="ChEBI" id="CHEBI:29105"/>
        <label>2</label>
    </ligand>
</feature>
<feature type="binding site" evidence="2">
    <location>
        <position position="98"/>
    </location>
    <ligand>
        <name>Zn(2+)</name>
        <dbReference type="ChEBI" id="CHEBI:29105"/>
        <label>2</label>
    </ligand>
</feature>
<accession>Q3EA33</accession>
<dbReference type="EMBL" id="Z97335">
    <property type="status" value="NOT_ANNOTATED_CDS"/>
    <property type="molecule type" value="Genomic_DNA"/>
</dbReference>
<dbReference type="EMBL" id="CP002687">
    <property type="protein sequence ID" value="AEE83396.1"/>
    <property type="molecule type" value="Genomic_DNA"/>
</dbReference>
<dbReference type="RefSeq" id="NP_680686.1">
    <property type="nucleotide sequence ID" value="NM_148320.1"/>
</dbReference>
<dbReference type="SMR" id="Q3EA33"/>
<dbReference type="BioGRID" id="12360">
    <property type="interactions" value="8"/>
</dbReference>
<dbReference type="IntAct" id="Q3EA33">
    <property type="interactions" value="9"/>
</dbReference>
<dbReference type="STRING" id="3702.Q3EA33"/>
<dbReference type="PaxDb" id="3702-AT4G14225.1"/>
<dbReference type="EnsemblPlants" id="AT4G14225.1">
    <property type="protein sequence ID" value="AT4G14225.1"/>
    <property type="gene ID" value="AT4G14225"/>
</dbReference>
<dbReference type="GeneID" id="827063"/>
<dbReference type="Gramene" id="AT4G14225.1">
    <property type="protein sequence ID" value="AT4G14225.1"/>
    <property type="gene ID" value="AT4G14225"/>
</dbReference>
<dbReference type="KEGG" id="ath:AT4G14225"/>
<dbReference type="Araport" id="AT4G14225"/>
<dbReference type="TAIR" id="AT4G14225"/>
<dbReference type="eggNOG" id="KOG3173">
    <property type="taxonomic scope" value="Eukaryota"/>
</dbReference>
<dbReference type="HOGENOM" id="CLU_057016_5_3_1"/>
<dbReference type="InParanoid" id="Q3EA33"/>
<dbReference type="OMA" id="CYKTISQ"/>
<dbReference type="PhylomeDB" id="Q3EA33"/>
<dbReference type="PRO" id="PR:Q3EA33"/>
<dbReference type="Proteomes" id="UP000006548">
    <property type="component" value="Chromosome 4"/>
</dbReference>
<dbReference type="ExpressionAtlas" id="Q3EA33">
    <property type="expression patterns" value="baseline and differential"/>
</dbReference>
<dbReference type="GO" id="GO:0003677">
    <property type="term" value="F:DNA binding"/>
    <property type="evidence" value="ECO:0007669"/>
    <property type="project" value="InterPro"/>
</dbReference>
<dbReference type="GO" id="GO:0008270">
    <property type="term" value="F:zinc ion binding"/>
    <property type="evidence" value="ECO:0007669"/>
    <property type="project" value="UniProtKB-KW"/>
</dbReference>
<dbReference type="FunFam" id="4.10.1110.10:FF:000001">
    <property type="entry name" value="Zinc finger AN1-type containing 6"/>
    <property type="match status" value="1"/>
</dbReference>
<dbReference type="Gene3D" id="1.20.5.4770">
    <property type="match status" value="1"/>
</dbReference>
<dbReference type="Gene3D" id="4.10.1110.10">
    <property type="entry name" value="AN1-like Zinc finger"/>
    <property type="match status" value="1"/>
</dbReference>
<dbReference type="InterPro" id="IPR035896">
    <property type="entry name" value="AN1-like_Znf"/>
</dbReference>
<dbReference type="InterPro" id="IPR050652">
    <property type="entry name" value="AN1_A20_ZnFinger"/>
</dbReference>
<dbReference type="InterPro" id="IPR002653">
    <property type="entry name" value="Znf_A20"/>
</dbReference>
<dbReference type="InterPro" id="IPR000058">
    <property type="entry name" value="Znf_AN1"/>
</dbReference>
<dbReference type="PANTHER" id="PTHR10634">
    <property type="entry name" value="AN1-TYPE ZINC FINGER PROTEIN"/>
    <property type="match status" value="1"/>
</dbReference>
<dbReference type="PANTHER" id="PTHR10634:SF124">
    <property type="entry name" value="ZINC FINGER A20 AND AN1 DOMAIN-CONTAINING STRESS-ASSOCIATED PROTEIN 8-RELATED"/>
    <property type="match status" value="1"/>
</dbReference>
<dbReference type="Pfam" id="PF01754">
    <property type="entry name" value="zf-A20"/>
    <property type="match status" value="1"/>
</dbReference>
<dbReference type="Pfam" id="PF01428">
    <property type="entry name" value="zf-AN1"/>
    <property type="match status" value="1"/>
</dbReference>
<dbReference type="SMART" id="SM00259">
    <property type="entry name" value="ZnF_A20"/>
    <property type="match status" value="1"/>
</dbReference>
<dbReference type="SMART" id="SM00154">
    <property type="entry name" value="ZnF_AN1"/>
    <property type="match status" value="1"/>
</dbReference>
<dbReference type="SUPFAM" id="SSF118310">
    <property type="entry name" value="AN1-like Zinc finger"/>
    <property type="match status" value="1"/>
</dbReference>
<dbReference type="SUPFAM" id="SSF57716">
    <property type="entry name" value="Glucocorticoid receptor-like (DNA-binding domain)"/>
    <property type="match status" value="1"/>
</dbReference>
<dbReference type="PROSITE" id="PS51036">
    <property type="entry name" value="ZF_A20"/>
    <property type="match status" value="1"/>
</dbReference>
<dbReference type="PROSITE" id="PS51039">
    <property type="entry name" value="ZF_AN1"/>
    <property type="match status" value="1"/>
</dbReference>
<evidence type="ECO:0000250" key="1"/>
<evidence type="ECO:0000255" key="2">
    <source>
        <dbReference type="PROSITE-ProRule" id="PRU00449"/>
    </source>
</evidence>
<evidence type="ECO:0000255" key="3">
    <source>
        <dbReference type="PROSITE-ProRule" id="PRU00451"/>
    </source>
</evidence>
<proteinExistence type="inferred from homology"/>
<organism>
    <name type="scientific">Arabidopsis thaliana</name>
    <name type="common">Mouse-ear cress</name>
    <dbReference type="NCBI Taxonomy" id="3702"/>
    <lineage>
        <taxon>Eukaryota</taxon>
        <taxon>Viridiplantae</taxon>
        <taxon>Streptophyta</taxon>
        <taxon>Embryophyta</taxon>
        <taxon>Tracheophyta</taxon>
        <taxon>Spermatophyta</taxon>
        <taxon>Magnoliopsida</taxon>
        <taxon>eudicotyledons</taxon>
        <taxon>Gunneridae</taxon>
        <taxon>Pentapetalae</taxon>
        <taxon>rosids</taxon>
        <taxon>malvids</taxon>
        <taxon>Brassicales</taxon>
        <taxon>Brassicaceae</taxon>
        <taxon>Camelineae</taxon>
        <taxon>Arabidopsis</taxon>
    </lineage>
</organism>
<keyword id="KW-0479">Metal-binding</keyword>
<keyword id="KW-1185">Reference proteome</keyword>
<keyword id="KW-0862">Zinc</keyword>
<keyword id="KW-0863">Zinc-finger</keyword>
<reference key="1">
    <citation type="journal article" date="1998" name="Nature">
        <title>Analysis of 1.9 Mb of contiguous sequence from chromosome 4 of Arabidopsis thaliana.</title>
        <authorList>
            <person name="Bevan M."/>
            <person name="Bancroft I."/>
            <person name="Bent E."/>
            <person name="Love K."/>
            <person name="Goodman H.M."/>
            <person name="Dean C."/>
            <person name="Bergkamp R."/>
            <person name="Dirkse W."/>
            <person name="van Staveren M."/>
            <person name="Stiekema W."/>
            <person name="Drost L."/>
            <person name="Ridley P."/>
            <person name="Hudson S.-A."/>
            <person name="Patel K."/>
            <person name="Murphy G."/>
            <person name="Piffanelli P."/>
            <person name="Wedler H."/>
            <person name="Wedler E."/>
            <person name="Wambutt R."/>
            <person name="Weitzenegger T."/>
            <person name="Pohl T."/>
            <person name="Terryn N."/>
            <person name="Gielen J."/>
            <person name="Villarroel R."/>
            <person name="De Clercq R."/>
            <person name="van Montagu M."/>
            <person name="Lecharny A."/>
            <person name="Aubourg S."/>
            <person name="Gy I."/>
            <person name="Kreis M."/>
            <person name="Lao N."/>
            <person name="Kavanagh T."/>
            <person name="Hempel S."/>
            <person name="Kotter P."/>
            <person name="Entian K.-D."/>
            <person name="Rieger M."/>
            <person name="Schaefer M."/>
            <person name="Funk B."/>
            <person name="Mueller-Auer S."/>
            <person name="Silvey M."/>
            <person name="James R."/>
            <person name="Monfort A."/>
            <person name="Pons A."/>
            <person name="Puigdomenech P."/>
            <person name="Douka A."/>
            <person name="Voukelatou E."/>
            <person name="Milioni D."/>
            <person name="Hatzopoulos P."/>
            <person name="Piravandi E."/>
            <person name="Obermaier B."/>
            <person name="Hilbert H."/>
            <person name="Duesterhoeft A."/>
            <person name="Moores T."/>
            <person name="Jones J.D.G."/>
            <person name="Eneva T."/>
            <person name="Palme K."/>
            <person name="Benes V."/>
            <person name="Rechmann S."/>
            <person name="Ansorge W."/>
            <person name="Cooke R."/>
            <person name="Berger C."/>
            <person name="Delseny M."/>
            <person name="Voet M."/>
            <person name="Volckaert G."/>
            <person name="Mewes H.-W."/>
            <person name="Klosterman S."/>
            <person name="Schueller C."/>
            <person name="Chalwatzis N."/>
        </authorList>
    </citation>
    <scope>NUCLEOTIDE SEQUENCE [LARGE SCALE GENOMIC DNA]</scope>
    <source>
        <strain>cv. Columbia</strain>
    </source>
</reference>
<reference key="2">
    <citation type="journal article" date="2017" name="Plant J.">
        <title>Araport11: a complete reannotation of the Arabidopsis thaliana reference genome.</title>
        <authorList>
            <person name="Cheng C.Y."/>
            <person name="Krishnakumar V."/>
            <person name="Chan A.P."/>
            <person name="Thibaud-Nissen F."/>
            <person name="Schobel S."/>
            <person name="Town C.D."/>
        </authorList>
    </citation>
    <scope>GENOME REANNOTATION</scope>
    <source>
        <strain>cv. Columbia</strain>
    </source>
</reference>
<reference key="3">
    <citation type="journal article" date="2006" name="Mol. Genet. Genomics">
        <title>Genome-wide analysis of the stress associated protein (SAP) gene family containing A20/AN1 zinc-finger(s) in rice and their phylogenetic relationship with Arabidopsis.</title>
        <authorList>
            <person name="Vij S."/>
            <person name="Tyagi A.K."/>
        </authorList>
    </citation>
    <scope>GENE FAMILY</scope>
</reference>
<protein>
    <recommendedName>
        <fullName>Putative zinc finger A20 and AN1 domain-containing stress-associated protein 8</fullName>
        <shortName>AtSAP8</shortName>
    </recommendedName>
</protein>